<dbReference type="EMBL" id="AF411109">
    <property type="protein sequence ID" value="AAL26480.1"/>
    <property type="molecule type" value="Genomic_DNA"/>
</dbReference>
<dbReference type="EMBL" id="AF370886">
    <property type="protein sequence ID" value="AAM76912.1"/>
    <property type="molecule type" value="mRNA"/>
</dbReference>
<dbReference type="EMBL" id="AB083598">
    <property type="protein sequence ID" value="BAB89311.1"/>
    <property type="molecule type" value="Genomic_DNA"/>
</dbReference>
<dbReference type="EMBL" id="AB065877">
    <property type="protein sequence ID" value="BAC06095.1"/>
    <property type="molecule type" value="Genomic_DNA"/>
</dbReference>
<dbReference type="EMBL" id="AJ305372">
    <property type="protein sequence ID" value="CAC83857.1"/>
    <property type="molecule type" value="mRNA"/>
</dbReference>
<dbReference type="EMBL" id="AL356486">
    <property type="status" value="NOT_ANNOTATED_CDS"/>
    <property type="molecule type" value="Genomic_DNA"/>
</dbReference>
<dbReference type="EMBL" id="BC103881">
    <property type="protein sequence ID" value="AAI03882.1"/>
    <property type="molecule type" value="mRNA"/>
</dbReference>
<dbReference type="EMBL" id="BC103882">
    <property type="protein sequence ID" value="AAI03883.1"/>
    <property type="molecule type" value="mRNA"/>
</dbReference>
<dbReference type="EMBL" id="BC103883">
    <property type="protein sequence ID" value="AAI03884.1"/>
    <property type="molecule type" value="mRNA"/>
</dbReference>
<dbReference type="CCDS" id="CCDS9482.1"/>
<dbReference type="RefSeq" id="NP_001333123.1">
    <property type="nucleotide sequence ID" value="NM_001346194.2"/>
</dbReference>
<dbReference type="RefSeq" id="NP_001333124.1">
    <property type="nucleotide sequence ID" value="NM_001346195.2"/>
</dbReference>
<dbReference type="RefSeq" id="NP_001333125.1">
    <property type="nucleotide sequence ID" value="NM_001346196.2"/>
</dbReference>
<dbReference type="RefSeq" id="NP_001333126.1">
    <property type="nucleotide sequence ID" value="NM_001346197.2"/>
</dbReference>
<dbReference type="RefSeq" id="NP_543008.3">
    <property type="nucleotide sequence ID" value="NM_080818.4"/>
</dbReference>
<dbReference type="RefSeq" id="XP_005254100.1">
    <property type="nucleotide sequence ID" value="XM_005254043.3"/>
</dbReference>
<dbReference type="RefSeq" id="XP_005254101.1">
    <property type="nucleotide sequence ID" value="XM_005254044.3"/>
</dbReference>
<dbReference type="RefSeq" id="XP_005254102.1">
    <property type="nucleotide sequence ID" value="XM_005254045.2"/>
</dbReference>
<dbReference type="RefSeq" id="XP_005254103.1">
    <property type="nucleotide sequence ID" value="XM_005254046.2"/>
</dbReference>
<dbReference type="RefSeq" id="XP_011519379.1">
    <property type="nucleotide sequence ID" value="XM_011521077.2"/>
</dbReference>
<dbReference type="RefSeq" id="XP_047286230.1">
    <property type="nucleotide sequence ID" value="XM_047430274.1"/>
</dbReference>
<dbReference type="RefSeq" id="XP_054230439.1">
    <property type="nucleotide sequence ID" value="XM_054374464.1"/>
</dbReference>
<dbReference type="RefSeq" id="XP_054230440.1">
    <property type="nucleotide sequence ID" value="XM_054374465.1"/>
</dbReference>
<dbReference type="SMR" id="Q96P68"/>
<dbReference type="BioGRID" id="118074">
    <property type="interactions" value="2"/>
</dbReference>
<dbReference type="FunCoup" id="Q96P68">
    <property type="interactions" value="753"/>
</dbReference>
<dbReference type="STRING" id="9606.ENSP00000298440"/>
<dbReference type="BindingDB" id="Q96P68"/>
<dbReference type="ChEMBL" id="CHEMBL2150840"/>
<dbReference type="GuidetoPHARMACOLOGY" id="162"/>
<dbReference type="GlyCosmos" id="Q96P68">
    <property type="glycosylation" value="4 sites, No reported glycans"/>
</dbReference>
<dbReference type="GlyGen" id="Q96P68">
    <property type="glycosylation" value="4 sites"/>
</dbReference>
<dbReference type="iPTMnet" id="Q96P68"/>
<dbReference type="PhosphoSitePlus" id="Q96P68"/>
<dbReference type="BioMuta" id="OXGR1"/>
<dbReference type="DMDM" id="48474598"/>
<dbReference type="PaxDb" id="9606-ENSP00000298440"/>
<dbReference type="Antibodypedia" id="10650">
    <property type="antibodies" value="121 antibodies from 27 providers"/>
</dbReference>
<dbReference type="DNASU" id="27199"/>
<dbReference type="Ensembl" id="ENST00000298440.5">
    <property type="protein sequence ID" value="ENSP00000298440.1"/>
    <property type="gene ID" value="ENSG00000165621.9"/>
</dbReference>
<dbReference type="Ensembl" id="ENST00000541038.2">
    <property type="protein sequence ID" value="ENSP00000437356.2"/>
    <property type="gene ID" value="ENSG00000165621.9"/>
</dbReference>
<dbReference type="Ensembl" id="ENST00000541518.6">
    <property type="protein sequence ID" value="ENSP00000445269.2"/>
    <property type="gene ID" value="ENSG00000165621.9"/>
</dbReference>
<dbReference type="Ensembl" id="ENST00000543457.6">
    <property type="protein sequence ID" value="ENSP00000438800.1"/>
    <property type="gene ID" value="ENSG00000165621.9"/>
</dbReference>
<dbReference type="GeneID" id="27199"/>
<dbReference type="KEGG" id="hsa:27199"/>
<dbReference type="MANE-Select" id="ENST00000541038.2">
    <property type="protein sequence ID" value="ENSP00000437356.2"/>
    <property type="RefSeq nucleotide sequence ID" value="NM_001346194.2"/>
    <property type="RefSeq protein sequence ID" value="NP_001333123.1"/>
</dbReference>
<dbReference type="UCSC" id="uc001vmx.1">
    <property type="organism name" value="human"/>
</dbReference>
<dbReference type="AGR" id="HGNC:4531"/>
<dbReference type="CTD" id="27199"/>
<dbReference type="DisGeNET" id="27199"/>
<dbReference type="GeneCards" id="OXGR1"/>
<dbReference type="HGNC" id="HGNC:4531">
    <property type="gene designation" value="OXGR1"/>
</dbReference>
<dbReference type="HPA" id="ENSG00000165621">
    <property type="expression patterns" value="Low tissue specificity"/>
</dbReference>
<dbReference type="MalaCards" id="OXGR1"/>
<dbReference type="MIM" id="606922">
    <property type="type" value="gene"/>
</dbReference>
<dbReference type="MIM" id="620374">
    <property type="type" value="phenotype"/>
</dbReference>
<dbReference type="neXtProt" id="NX_Q96P68"/>
<dbReference type="OpenTargets" id="ENSG00000165621"/>
<dbReference type="PharmGKB" id="PA28924"/>
<dbReference type="VEuPathDB" id="HostDB:ENSG00000165621"/>
<dbReference type="eggNOG" id="ENOG502QYYG">
    <property type="taxonomic scope" value="Eukaryota"/>
</dbReference>
<dbReference type="GeneTree" id="ENSGT01030000234621"/>
<dbReference type="HOGENOM" id="CLU_009579_8_2_1"/>
<dbReference type="InParanoid" id="Q96P68"/>
<dbReference type="OMA" id="FVIIHPM"/>
<dbReference type="OrthoDB" id="5967390at2759"/>
<dbReference type="PAN-GO" id="Q96P68">
    <property type="GO annotations" value="3 GO annotations based on evolutionary models"/>
</dbReference>
<dbReference type="PhylomeDB" id="Q96P68"/>
<dbReference type="TreeFam" id="TF330775"/>
<dbReference type="PathwayCommons" id="Q96P68"/>
<dbReference type="Reactome" id="R-HSA-373076">
    <property type="pathway name" value="Class A/1 (Rhodopsin-like receptors)"/>
</dbReference>
<dbReference type="Reactome" id="R-HSA-418594">
    <property type="pathway name" value="G alpha (i) signalling events"/>
</dbReference>
<dbReference type="SignaLink" id="Q96P68"/>
<dbReference type="SIGNOR" id="Q96P68"/>
<dbReference type="BioGRID-ORCS" id="27199">
    <property type="hits" value="7 hits in 1138 CRISPR screens"/>
</dbReference>
<dbReference type="GeneWiki" id="OXGR1"/>
<dbReference type="GenomeRNAi" id="27199"/>
<dbReference type="Pharos" id="Q96P68">
    <property type="development level" value="Tchem"/>
</dbReference>
<dbReference type="PRO" id="PR:Q96P68"/>
<dbReference type="Proteomes" id="UP000005640">
    <property type="component" value="Chromosome 13"/>
</dbReference>
<dbReference type="RNAct" id="Q96P68">
    <property type="molecule type" value="protein"/>
</dbReference>
<dbReference type="Bgee" id="ENSG00000165621">
    <property type="expression patterns" value="Expressed in islet of Langerhans and 91 other cell types or tissues"/>
</dbReference>
<dbReference type="ExpressionAtlas" id="Q96P68">
    <property type="expression patterns" value="baseline and differential"/>
</dbReference>
<dbReference type="GO" id="GO:0016020">
    <property type="term" value="C:membrane"/>
    <property type="evidence" value="ECO:0000304"/>
    <property type="project" value="UniProtKB"/>
</dbReference>
<dbReference type="GO" id="GO:0005886">
    <property type="term" value="C:plasma membrane"/>
    <property type="evidence" value="ECO:0000314"/>
    <property type="project" value="HPA"/>
</dbReference>
<dbReference type="GO" id="GO:0004930">
    <property type="term" value="F:G protein-coupled receptor activity"/>
    <property type="evidence" value="ECO:0000314"/>
    <property type="project" value="UniProt"/>
</dbReference>
<dbReference type="GO" id="GO:0038023">
    <property type="term" value="F:signaling receptor activity"/>
    <property type="evidence" value="ECO:0000318"/>
    <property type="project" value="GO_Central"/>
</dbReference>
<dbReference type="GO" id="GO:0007186">
    <property type="term" value="P:G protein-coupled receptor signaling pathway"/>
    <property type="evidence" value="ECO:0000318"/>
    <property type="project" value="GO_Central"/>
</dbReference>
<dbReference type="GO" id="GO:0007200">
    <property type="term" value="P:phospholipase C-activating G protein-coupled receptor signaling pathway"/>
    <property type="evidence" value="ECO:0000314"/>
    <property type="project" value="UniProt"/>
</dbReference>
<dbReference type="CDD" id="cd15375">
    <property type="entry name" value="7tmA_OXGR1"/>
    <property type="match status" value="1"/>
</dbReference>
<dbReference type="FunFam" id="1.20.1070.10:FF:000293">
    <property type="entry name" value="2-oxoglutarate receptor 1"/>
    <property type="match status" value="1"/>
</dbReference>
<dbReference type="Gene3D" id="1.20.1070.10">
    <property type="entry name" value="Rhodopsin 7-helix transmembrane proteins"/>
    <property type="match status" value="1"/>
</dbReference>
<dbReference type="InterPro" id="IPR000276">
    <property type="entry name" value="GPCR_Rhodpsn"/>
</dbReference>
<dbReference type="InterPro" id="IPR017452">
    <property type="entry name" value="GPCR_Rhodpsn_7TM"/>
</dbReference>
<dbReference type="PANTHER" id="PTHR24231:SF15">
    <property type="entry name" value="2-OXOGLUTARATE RECEPTOR 1"/>
    <property type="match status" value="1"/>
</dbReference>
<dbReference type="PANTHER" id="PTHR24231">
    <property type="entry name" value="PURINOCEPTOR-RELATED G-PROTEIN COUPLED RECEPTOR"/>
    <property type="match status" value="1"/>
</dbReference>
<dbReference type="Pfam" id="PF00001">
    <property type="entry name" value="7tm_1"/>
    <property type="match status" value="1"/>
</dbReference>
<dbReference type="PRINTS" id="PR00237">
    <property type="entry name" value="GPCRRHODOPSN"/>
</dbReference>
<dbReference type="PRINTS" id="PR01157">
    <property type="entry name" value="P2YPURNOCPTR"/>
</dbReference>
<dbReference type="SUPFAM" id="SSF81321">
    <property type="entry name" value="Family A G protein-coupled receptor-like"/>
    <property type="match status" value="1"/>
</dbReference>
<dbReference type="PROSITE" id="PS50262">
    <property type="entry name" value="G_PROTEIN_RECEP_F1_2"/>
    <property type="match status" value="1"/>
</dbReference>
<name>OXGR1_HUMAN</name>
<keyword id="KW-1003">Cell membrane</keyword>
<keyword id="KW-0225">Disease variant</keyword>
<keyword id="KW-1015">Disulfide bond</keyword>
<keyword id="KW-0297">G-protein coupled receptor</keyword>
<keyword id="KW-0325">Glycoprotein</keyword>
<keyword id="KW-0391">Immunity</keyword>
<keyword id="KW-0399">Innate immunity</keyword>
<keyword id="KW-0472">Membrane</keyword>
<keyword id="KW-0675">Receptor</keyword>
<keyword id="KW-1185">Reference proteome</keyword>
<keyword id="KW-0807">Transducer</keyword>
<keyword id="KW-0812">Transmembrane</keyword>
<keyword id="KW-1133">Transmembrane helix</keyword>
<proteinExistence type="evidence at protein level"/>
<accession>Q96P68</accession>
<accession>Q5T5A7</accession>
<accession>Q86TL1</accession>
<organism>
    <name type="scientific">Homo sapiens</name>
    <name type="common">Human</name>
    <dbReference type="NCBI Taxonomy" id="9606"/>
    <lineage>
        <taxon>Eukaryota</taxon>
        <taxon>Metazoa</taxon>
        <taxon>Chordata</taxon>
        <taxon>Craniata</taxon>
        <taxon>Vertebrata</taxon>
        <taxon>Euteleostomi</taxon>
        <taxon>Mammalia</taxon>
        <taxon>Eutheria</taxon>
        <taxon>Euarchontoglires</taxon>
        <taxon>Primates</taxon>
        <taxon>Haplorrhini</taxon>
        <taxon>Catarrhini</taxon>
        <taxon>Hominidae</taxon>
        <taxon>Homo</taxon>
    </lineage>
</organism>
<gene>
    <name type="primary">OXGR1</name>
    <name type="synonym">GPR80</name>
    <name evidence="7" type="synonym">GPR99</name>
    <name type="synonym">P2RY15</name>
    <name type="synonym">P2Y15</name>
</gene>
<feature type="chain" id="PRO_0000069994" description="2-oxoglutarate receptor 1">
    <location>
        <begin position="1"/>
        <end position="337"/>
    </location>
</feature>
<feature type="topological domain" description="Extracellular" evidence="2">
    <location>
        <begin position="1"/>
        <end position="34"/>
    </location>
</feature>
<feature type="transmembrane region" description="Helical; Name=1" evidence="2">
    <location>
        <begin position="35"/>
        <end position="55"/>
    </location>
</feature>
<feature type="topological domain" description="Cytoplasmic" evidence="2">
    <location>
        <begin position="56"/>
        <end position="69"/>
    </location>
</feature>
<feature type="transmembrane region" description="Helical; Name=2" evidence="2">
    <location>
        <begin position="70"/>
        <end position="90"/>
    </location>
</feature>
<feature type="topological domain" description="Extracellular" evidence="2">
    <location>
        <begin position="91"/>
        <end position="116"/>
    </location>
</feature>
<feature type="transmembrane region" description="Helical; Name=3" evidence="2">
    <location>
        <begin position="117"/>
        <end position="137"/>
    </location>
</feature>
<feature type="topological domain" description="Cytoplasmic" evidence="2">
    <location>
        <begin position="138"/>
        <end position="151"/>
    </location>
</feature>
<feature type="transmembrane region" description="Helical; Name=4" evidence="2">
    <location>
        <begin position="152"/>
        <end position="172"/>
    </location>
</feature>
<feature type="topological domain" description="Extracellular" evidence="2">
    <location>
        <begin position="173"/>
        <end position="201"/>
    </location>
</feature>
<feature type="transmembrane region" description="Helical; Name=5" evidence="2">
    <location>
        <begin position="202"/>
        <end position="222"/>
    </location>
</feature>
<feature type="topological domain" description="Cytoplasmic" evidence="2">
    <location>
        <begin position="223"/>
        <end position="242"/>
    </location>
</feature>
<feature type="transmembrane region" description="Helical; Name=6" evidence="2">
    <location>
        <begin position="243"/>
        <end position="263"/>
    </location>
</feature>
<feature type="topological domain" description="Extracellular" evidence="2">
    <location>
        <begin position="264"/>
        <end position="284"/>
    </location>
</feature>
<feature type="transmembrane region" description="Helical; Name=7" evidence="2">
    <location>
        <begin position="285"/>
        <end position="305"/>
    </location>
</feature>
<feature type="topological domain" description="Cytoplasmic" evidence="2">
    <location>
        <begin position="306"/>
        <end position="337"/>
    </location>
</feature>
<feature type="glycosylation site" description="N-linked (GlcNAc...) asparagine" evidence="2">
    <location>
        <position position="10"/>
    </location>
</feature>
<feature type="glycosylation site" description="N-linked (GlcNAc...) asparagine" evidence="2">
    <location>
        <position position="23"/>
    </location>
</feature>
<feature type="glycosylation site" description="N-linked (GlcNAc...) asparagine" evidence="2">
    <location>
        <position position="176"/>
    </location>
</feature>
<feature type="glycosylation site" description="N-linked (GlcNAc...) asparagine" evidence="2">
    <location>
        <position position="179"/>
    </location>
</feature>
<feature type="disulfide bond" evidence="3">
    <location>
        <begin position="106"/>
        <end position="183"/>
    </location>
</feature>
<feature type="sequence variant" id="VAR_088608" description="In CAON2; uncertain significance; loss of alpha-ketoglutarate-dependent G protein-coupled receptor activity at pH 5 and pH 7 when expressed in a heterologous system." evidence="5">
    <original>Y</original>
    <variation>H</variation>
    <location>
        <position position="93"/>
    </location>
</feature>
<feature type="sequence variant" id="VAR_088609" description="In CAON2; likely pathogenic; loss of alpha-ketoglutarate-dependent G protein-coupled receptor activity at pH 5 but not at PH 7 when expressed in a heterologous system." evidence="5">
    <original>L</original>
    <variation>R</variation>
    <location>
        <position position="124"/>
    </location>
</feature>
<feature type="sequence variant" id="VAR_088610" description="In CAON2; uncertain significance; loss of alpha-ketoglutarate-dependent G protein-coupled receptor activity at pH 7 but not at pH 5 when expressed in a heterologous system." evidence="5">
    <original>C</original>
    <variation>R</variation>
    <location>
        <position position="217"/>
    </location>
</feature>
<feature type="sequence variant" id="VAR_088611" description="In CAON2; uncertain significance; loss of alpha-ketoglutarate-dependent G protein-coupled receptor activity at pH 5 but not at pH 7 when expressed in a heterologous system." evidence="5">
    <original>S</original>
    <variation>R</variation>
    <location>
        <position position="233"/>
    </location>
</feature>
<feature type="sequence variant" id="VAR_088612" description="In CAON2; uncertain significance." evidence="5">
    <original>S</original>
    <variation>F</variation>
    <location>
        <position position="287"/>
    </location>
</feature>
<feature type="mutagenesis site" description="Loss of itaconate-induced intracellular calcium response." evidence="6">
    <original>C</original>
    <variation>A</variation>
    <location>
        <position position="106"/>
    </location>
</feature>
<feature type="mutagenesis site" description="Slightly decreases itaconate- or alpha-ketoglutarate-induced intracellular calcium response." evidence="6">
    <original>K</original>
    <variation>A</variation>
    <location>
        <position position="107"/>
    </location>
</feature>
<feature type="mutagenesis site" description="Loss of itaconate-induced receptor endocytosis and intracellular calcium response." evidence="6">
    <original>R</original>
    <variation>A</variation>
    <location>
        <position position="110"/>
    </location>
</feature>
<feature type="mutagenesis site" description="Markedly impairs itaconate- or alpha-ketoglutarate-induced intracellular calcium response." evidence="6">
    <original>H</original>
    <variation>A</variation>
    <location>
        <position position="114"/>
    </location>
</feature>
<feature type="mutagenesis site" description="Markedly impairs itaconate- or alpha-ketoglutarate-induced intracellular calcium response." evidence="6">
    <original>Y</original>
    <variation>F</variation>
    <location>
        <position position="118"/>
    </location>
</feature>
<feature type="mutagenesis site" description="Markedly impairs itaconate- or alpha-ketoglutarate-induced intracellular calcium response." evidence="6">
    <original>I</original>
    <variation>A</variation>
    <location>
        <position position="121"/>
    </location>
</feature>
<feature type="mutagenesis site" description="Loss of itaconate-induced intracellular calcium response." evidence="6">
    <original>H</original>
    <variation>A</variation>
    <location>
        <position position="258"/>
    </location>
</feature>
<feature type="mutagenesis site" description="Loss of itaconate-induced receptor endocytosis and intracellular calcium response." evidence="6">
    <original>R</original>
    <variation>A</variation>
    <location>
        <position position="261"/>
    </location>
</feature>
<feature type="mutagenesis site" description="Slightly decreases itaconate- or alpha-ketoglutarate-induced intracellular calcium response." evidence="6">
    <original>R</original>
    <variation>A</variation>
    <location>
        <position position="264"/>
    </location>
</feature>
<feature type="mutagenesis site" description="Loss of itaconate-induced intracellular calcium response." evidence="6">
    <original>I</original>
    <variation>A</variation>
    <location>
        <position position="265"/>
    </location>
</feature>
<feature type="mutagenesis site" description="Markedly impairs itaconate- or alpha-ketoglutarate-induced intracellular calcium response." evidence="6">
    <original>I</original>
    <variation>A</variation>
    <location>
        <position position="285"/>
    </location>
</feature>
<feature type="mutagenesis site" description="Markedly impairs itaconate- or alpha-ketoglutarate-induced intracellular calcium response." evidence="6">
    <original>R</original>
    <variation>A</variation>
    <location>
        <position position="288"/>
    </location>
</feature>
<feature type="sequence conflict" description="In Ref. 5; CAC83857." evidence="8" ref="5">
    <original>F</original>
    <variation>L</variation>
    <location>
        <position position="14"/>
    </location>
</feature>
<feature type="sequence conflict" description="In Ref. 5; CAC83857." evidence="8" ref="5">
    <original>K</original>
    <variation>R</variation>
    <location>
        <position position="236"/>
    </location>
</feature>
<evidence type="ECO:0000250" key="1">
    <source>
        <dbReference type="UniProtKB" id="Q6IYF8"/>
    </source>
</evidence>
<evidence type="ECO:0000255" key="2"/>
<evidence type="ECO:0000255" key="3">
    <source>
        <dbReference type="PROSITE-ProRule" id="PRU00521"/>
    </source>
</evidence>
<evidence type="ECO:0000269" key="4">
    <source>
    </source>
</evidence>
<evidence type="ECO:0000269" key="5">
    <source>
    </source>
</evidence>
<evidence type="ECO:0000269" key="6">
    <source>
    </source>
</evidence>
<evidence type="ECO:0000303" key="7">
    <source>
    </source>
</evidence>
<evidence type="ECO:0000305" key="8"/>
<comment type="function">
    <text evidence="1 4 5 6">G protein-coupled receptor for dicarboxylates and amino dicarboxylates (PubMed:15141213, PubMed:36571463, PubMed:36919698). Receptor for itaconate, a metabolite produced by myeloid lineages (PubMed:36919698). In the respiratory epithelium, couples the binding of itaconate to the activation of GNA11 and downstream intracellular Ca(2+) release, leading to mucocilliary clearance of airborne pathogens (PubMed:36919698). Receptor for leukotriene E4 (LTE4) produced by mast cells upon allergic inflammation. Binds with high affinity to LTE4 and elicits mucin release from pulmonary epithelium in response to airborne fungi allergens. Regulates mucin-producing goblet cell homeostasis (By similarity). Receptor for alpha-ketoglutarate produced by proximal tubule renal cells upon metabolic alkalosis. In an intrarenal paracrine signaling pathway, binds alpha-ketoglutarate and drives transepithelial salt reabsorption and bicarbonate secretion by SLC26A4/pendrin-positive intercalated cells (By similarity) (PubMed:15141213).</text>
</comment>
<comment type="subcellular location">
    <subcellularLocation>
        <location evidence="4 6">Cell membrane</location>
        <topology evidence="2">Multi-pass membrane protein</topology>
    </subcellularLocation>
    <text evidence="6">Upon itaconate binding, internalizes via endocytosis in a beta-arrestin dependent manner.</text>
</comment>
<comment type="tissue specificity">
    <text>Detected in kidney and, to a lower extent, in placenta. Not detected in brain tissues including the frontal cortex, caudate putamen, thalamus, hypothalamus, hippocampus or pons.</text>
</comment>
<comment type="disease" evidence="5">
    <disease id="DI-06686">
        <name>Nephrolithiasis, calcium oxalate, 2, with nephrocalcinosis</name>
        <acronym>CAON2</acronym>
        <description>A form of nephrolithiasis, a condition in which urinary supersaturation leads to calcium oxalate stone formation in the urinary system. CAON2 is an autosomal dominant form often resultings in nephrocalcinosis.</description>
        <dbReference type="MIM" id="620374"/>
    </disease>
    <text>The disease is caused by variants affecting the gene represented in this entry.</text>
</comment>
<comment type="similarity">
    <text evidence="3">Belongs to the G-protein coupled receptor 1 family.</text>
</comment>
<comment type="caution">
    <text evidence="8">Was originally (Ref.5) thought to be a P2Y receptor.</text>
</comment>
<sequence>MNEPLDYLANASDFPDYAAAFGNCTDENIPLKMHYLPVIYGIIFLVGFPGNAVVISTYIFKMRPWKSSTIIMLNLACTDLLYLTSLPFLIHYYASGENWIFGDFMCKFIRFSFHFNLYSSILFLTCFSIFRYCVIIHPMSCFSIHKTRCAVVACAVVWIISLVAVIPMTFLITSTNRTNRSACLDLTSSDELNTIKWYNLILTATTFCLPLVIVTLCYTTIIHTLTHGLQTDSCLKQKARRLTILLLLAFYVCFLPFHILRVIRIESRLLSISCSIENQIHEAYIVSRPLAALNTFGNLLLYVVVSDNFQQAVCSTVRCKVSGNLEQAKKISYSNNP</sequence>
<protein>
    <recommendedName>
        <fullName>2-oxoglutarate receptor 1</fullName>
    </recommendedName>
    <alternativeName>
        <fullName>Alpha-ketoglutarate receptor 1</fullName>
    </alternativeName>
    <alternativeName>
        <fullName>G-protein coupled receptor 80</fullName>
    </alternativeName>
    <alternativeName>
        <fullName>G-protein coupled receptor 99</fullName>
    </alternativeName>
    <alternativeName>
        <fullName>P2Y purinoceptor 15</fullName>
        <shortName>P2Y15</shortName>
    </alternativeName>
    <alternativeName>
        <fullName>P2Y-like GPCR</fullName>
    </alternativeName>
    <alternativeName>
        <fullName>P2Y-like nucleotide receptor</fullName>
    </alternativeName>
</protein>
<reference key="1">
    <citation type="journal article" date="2001" name="Gene">
        <title>Discovery and mapping of ten novel G protein-coupled receptor genes.</title>
        <authorList>
            <person name="Lee D.K."/>
            <person name="Nguyen T."/>
            <person name="Lynch K.R."/>
            <person name="Cheng R."/>
            <person name="Vanti W.B."/>
            <person name="Arkhitko O."/>
            <person name="Lewis T."/>
            <person name="Evans J.F."/>
            <person name="George S.R."/>
            <person name="O'Dowd B.F."/>
        </authorList>
    </citation>
    <scope>NUCLEOTIDE SEQUENCE [GENOMIC DNA]</scope>
</reference>
<reference key="2">
    <citation type="journal article" date="2002" name="BMC Genomics">
        <title>GPR99, a new G protein-coupled receptor with homology to a new subgroup of nucleotide receptors.</title>
        <authorList>
            <person name="Wittenberger T."/>
            <person name="Hellebrand S."/>
            <person name="Munck A."/>
            <person name="Kreienkamp H.-J."/>
            <person name="Schaller H.C."/>
            <person name="Hampe W."/>
        </authorList>
    </citation>
    <scope>NUCLEOTIDE SEQUENCE [MRNA]</scope>
    <source>
        <tissue>Placenta</tissue>
    </source>
</reference>
<reference key="3">
    <citation type="journal article" date="2002" name="FEBS Lett.">
        <title>Identification of G protein-coupled receptor genes from the human genome sequence.</title>
        <authorList>
            <person name="Takeda S."/>
            <person name="Kadowaki S."/>
            <person name="Haga T."/>
            <person name="Takaesu H."/>
            <person name="Mitaku S."/>
        </authorList>
    </citation>
    <scope>NUCLEOTIDE SEQUENCE [LARGE SCALE GENOMIC DNA]</scope>
</reference>
<reference key="4">
    <citation type="submission" date="2001-07" db="EMBL/GenBank/DDBJ databases">
        <title>Genome-wide discovery and analysis of human seven transmembrane helix receptor genes.</title>
        <authorList>
            <person name="Suwa M."/>
            <person name="Sato T."/>
            <person name="Okouchi I."/>
            <person name="Arita M."/>
            <person name="Futami K."/>
            <person name="Matsumoto S."/>
            <person name="Tsutsumi S."/>
            <person name="Aburatani H."/>
            <person name="Asai K."/>
            <person name="Akiyama Y."/>
        </authorList>
    </citation>
    <scope>NUCLEOTIDE SEQUENCE [GENOMIC DNA]</scope>
</reference>
<reference key="5">
    <citation type="submission" date="2003-02" db="EMBL/GenBank/DDBJ databases">
        <title>Molecular cloning and functional characterization of a new human P2Y receptor.</title>
        <authorList>
            <person name="Bruess M."/>
            <person name="Bonisch H."/>
            <person name="von Kugelgen I."/>
        </authorList>
    </citation>
    <scope>NUCLEOTIDE SEQUENCE [MRNA]</scope>
    <source>
        <tissue>Thyroid</tissue>
    </source>
</reference>
<reference key="6">
    <citation type="journal article" date="2004" name="Nature">
        <title>The DNA sequence and analysis of human chromosome 13.</title>
        <authorList>
            <person name="Dunham A."/>
            <person name="Matthews L.H."/>
            <person name="Burton J."/>
            <person name="Ashurst J.L."/>
            <person name="Howe K.L."/>
            <person name="Ashcroft K.J."/>
            <person name="Beare D.M."/>
            <person name="Burford D.C."/>
            <person name="Hunt S.E."/>
            <person name="Griffiths-Jones S."/>
            <person name="Jones M.C."/>
            <person name="Keenan S.J."/>
            <person name="Oliver K."/>
            <person name="Scott C.E."/>
            <person name="Ainscough R."/>
            <person name="Almeida J.P."/>
            <person name="Ambrose K.D."/>
            <person name="Andrews D.T."/>
            <person name="Ashwell R.I.S."/>
            <person name="Babbage A.K."/>
            <person name="Bagguley C.L."/>
            <person name="Bailey J."/>
            <person name="Bannerjee R."/>
            <person name="Barlow K.F."/>
            <person name="Bates K."/>
            <person name="Beasley H."/>
            <person name="Bird C.P."/>
            <person name="Bray-Allen S."/>
            <person name="Brown A.J."/>
            <person name="Brown J.Y."/>
            <person name="Burrill W."/>
            <person name="Carder C."/>
            <person name="Carter N.P."/>
            <person name="Chapman J.C."/>
            <person name="Clamp M.E."/>
            <person name="Clark S.Y."/>
            <person name="Clarke G."/>
            <person name="Clee C.M."/>
            <person name="Clegg S.C."/>
            <person name="Cobley V."/>
            <person name="Collins J.E."/>
            <person name="Corby N."/>
            <person name="Coville G.J."/>
            <person name="Deloukas P."/>
            <person name="Dhami P."/>
            <person name="Dunham I."/>
            <person name="Dunn M."/>
            <person name="Earthrowl M.E."/>
            <person name="Ellington A.G."/>
            <person name="Faulkner L."/>
            <person name="Frankish A.G."/>
            <person name="Frankland J."/>
            <person name="French L."/>
            <person name="Garner P."/>
            <person name="Garnett J."/>
            <person name="Gilbert J.G.R."/>
            <person name="Gilson C.J."/>
            <person name="Ghori J."/>
            <person name="Grafham D.V."/>
            <person name="Gribble S.M."/>
            <person name="Griffiths C."/>
            <person name="Hall R.E."/>
            <person name="Hammond S."/>
            <person name="Harley J.L."/>
            <person name="Hart E.A."/>
            <person name="Heath P.D."/>
            <person name="Howden P.J."/>
            <person name="Huckle E.J."/>
            <person name="Hunt P.J."/>
            <person name="Hunt A.R."/>
            <person name="Johnson C."/>
            <person name="Johnson D."/>
            <person name="Kay M."/>
            <person name="Kimberley A.M."/>
            <person name="King A."/>
            <person name="Laird G.K."/>
            <person name="Langford C.J."/>
            <person name="Lawlor S."/>
            <person name="Leongamornlert D.A."/>
            <person name="Lloyd D.M."/>
            <person name="Lloyd C."/>
            <person name="Loveland J.E."/>
            <person name="Lovell J."/>
            <person name="Martin S."/>
            <person name="Mashreghi-Mohammadi M."/>
            <person name="McLaren S.J."/>
            <person name="McMurray A."/>
            <person name="Milne S."/>
            <person name="Moore M.J.F."/>
            <person name="Nickerson T."/>
            <person name="Palmer S.A."/>
            <person name="Pearce A.V."/>
            <person name="Peck A.I."/>
            <person name="Pelan S."/>
            <person name="Phillimore B."/>
            <person name="Porter K.M."/>
            <person name="Rice C.M."/>
            <person name="Searle S."/>
            <person name="Sehra H.K."/>
            <person name="Shownkeen R."/>
            <person name="Skuce C.D."/>
            <person name="Smith M."/>
            <person name="Steward C.A."/>
            <person name="Sycamore N."/>
            <person name="Tester J."/>
            <person name="Thomas D.W."/>
            <person name="Tracey A."/>
            <person name="Tromans A."/>
            <person name="Tubby B."/>
            <person name="Wall M."/>
            <person name="Wallis J.M."/>
            <person name="West A.P."/>
            <person name="Whitehead S.L."/>
            <person name="Willey D.L."/>
            <person name="Wilming L."/>
            <person name="Wray P.W."/>
            <person name="Wright M.W."/>
            <person name="Young L."/>
            <person name="Coulson A."/>
            <person name="Durbin R.M."/>
            <person name="Hubbard T."/>
            <person name="Sulston J.E."/>
            <person name="Beck S."/>
            <person name="Bentley D.R."/>
            <person name="Rogers J."/>
            <person name="Ross M.T."/>
        </authorList>
    </citation>
    <scope>NUCLEOTIDE SEQUENCE [LARGE SCALE GENOMIC DNA]</scope>
</reference>
<reference key="7">
    <citation type="journal article" date="2004" name="Genome Res.">
        <title>The status, quality, and expansion of the NIH full-length cDNA project: the Mammalian Gene Collection (MGC).</title>
        <authorList>
            <consortium name="The MGC Project Team"/>
        </authorList>
    </citation>
    <scope>NUCLEOTIDE SEQUENCE [LARGE SCALE MRNA]</scope>
</reference>
<reference key="8">
    <citation type="journal article" date="2004" name="Nature">
        <title>Citric acid cycle intermediates as ligands for orphan G-protein-coupled receptors.</title>
        <authorList>
            <person name="He W."/>
            <person name="Miao F.J.-P."/>
            <person name="Lin D.C.-H."/>
            <person name="Schwandner R.T."/>
            <person name="Wang Z."/>
            <person name="Gao J."/>
            <person name="Chen J.-L."/>
            <person name="Tian H."/>
            <person name="Ling L."/>
        </authorList>
    </citation>
    <scope>FUNCTION</scope>
    <scope>SUBCELLULAR LOCATION</scope>
</reference>
<reference key="9">
    <citation type="journal article" date="2023" name="J. Clin. Invest.">
        <title>The immunometabolite itaconate stimulates OXGR1 to promote mucociliary clearance during the pulmonary innate immune response.</title>
        <authorList>
            <person name="Zeng Y.R."/>
            <person name="Song J.B."/>
            <person name="Wang D."/>
            <person name="Huang Z.X."/>
            <person name="Zhang C."/>
            <person name="Sun Y.P."/>
            <person name="Shu G."/>
            <person name="Xiong Y."/>
            <person name="Guan K.L."/>
            <person name="Ye D."/>
            <person name="Wang P."/>
        </authorList>
    </citation>
    <scope>FUNCTION</scope>
    <scope>SUBCELLULAR LOCATION</scope>
    <scope>MUTAGENESIS OF CYS-106; LYS-107; ARG-110; HIS-114; TYR-118; ILE-121; HIS-258; ARG-261; ARG-264; ILE-265; ILE-285 AND ARG-288</scope>
</reference>
<reference key="10">
    <citation type="journal article" date="2023" name="Genet. Med.">
        <title>OXGR1 is a candidate disease gene for human calcium oxalate nephrolithiasis.</title>
        <authorList>
            <person name="Majmundar A.J."/>
            <person name="Widmeier E."/>
            <person name="Heneghan J.F."/>
            <person name="Daga A."/>
            <person name="Wu C.W."/>
            <person name="Buerger F."/>
            <person name="Hugo H."/>
            <person name="Ullah I."/>
            <person name="Amar A."/>
            <person name="Ottlewski I."/>
            <person name="Braun D.A."/>
            <person name="Jobst-Schwan T."/>
            <person name="Lawson J.A."/>
            <person name="Zahoor M.Y."/>
            <person name="Rodig N.M."/>
            <person name="Tasic V."/>
            <person name="Nelson C.P."/>
            <person name="Khaliq S."/>
            <person name="Schoenauer R."/>
            <person name="Halbritter J."/>
            <person name="Sayer J.A."/>
            <person name="Fathy H.M."/>
            <person name="Baum M.A."/>
            <person name="Shril S."/>
            <person name="Mane S."/>
            <person name="Alper S.L."/>
            <person name="Hildebrandt F."/>
        </authorList>
    </citation>
    <scope>INVOLVEMENT IN CAON2</scope>
    <scope>VARIANTS CAON2 HIS-93; ARG-124; ARG-217; ARG-233 AND PHE-287</scope>
    <scope>CHARACTERIZATION OF VARIANTS CAON2 HIS-93; ARG-124; ARG-217 AND ARG-233</scope>
    <scope>FUNCTION</scope>
</reference>